<sequence>QVNFSPGWGT</sequence>
<evidence type="ECO:0000250" key="1">
    <source>
        <dbReference type="UniProtKB" id="P67790"/>
    </source>
</evidence>
<evidence type="ECO:0000255" key="2"/>
<evidence type="ECO:0000269" key="3">
    <source>
    </source>
</evidence>
<evidence type="ECO:0000303" key="4">
    <source>
    </source>
</evidence>
<evidence type="ECO:0000305" key="5"/>
<organism>
    <name type="scientific">Panchlora sp. (strain SR-2005)</name>
    <name type="common">Cockroach</name>
    <dbReference type="NCBI Taxonomy" id="348758"/>
    <lineage>
        <taxon>Eukaryota</taxon>
        <taxon>Metazoa</taxon>
        <taxon>Ecdysozoa</taxon>
        <taxon>Arthropoda</taxon>
        <taxon>Hexapoda</taxon>
        <taxon>Insecta</taxon>
        <taxon>Pterygota</taxon>
        <taxon>Neoptera</taxon>
        <taxon>Polyneoptera</taxon>
        <taxon>Dictyoptera</taxon>
        <taxon>Blattodea</taxon>
        <taxon>Blaberoidea</taxon>
        <taxon>Blaberidae</taxon>
        <taxon>Panchlorinae</taxon>
        <taxon>Panchlora</taxon>
    </lineage>
</organism>
<reference evidence="5" key="1">
    <citation type="journal article" date="2009" name="BMC Evol. Biol.">
        <title>A proteomic approach for studying insect phylogeny: CAPA peptides of ancient insect taxa (Dictyoptera, Blattoptera) as a test case.</title>
        <authorList>
            <person name="Roth S."/>
            <person name="Fromm B."/>
            <person name="Gaede G."/>
            <person name="Predel R."/>
        </authorList>
    </citation>
    <scope>PROTEIN SEQUENCE</scope>
    <scope>PYROGLUTAMATE FORMATION AT GLN-1</scope>
    <scope>AMIDATION AT THR-10</scope>
    <source>
        <tissue evidence="3">Corpora cardiaca</tissue>
    </source>
</reference>
<proteinExistence type="evidence at protein level"/>
<dbReference type="GO" id="GO:0005576">
    <property type="term" value="C:extracellular region"/>
    <property type="evidence" value="ECO:0007669"/>
    <property type="project" value="UniProtKB-SubCell"/>
</dbReference>
<dbReference type="GO" id="GO:0005179">
    <property type="term" value="F:hormone activity"/>
    <property type="evidence" value="ECO:0007669"/>
    <property type="project" value="UniProtKB-KW"/>
</dbReference>
<dbReference type="GO" id="GO:0007218">
    <property type="term" value="P:neuropeptide signaling pathway"/>
    <property type="evidence" value="ECO:0007669"/>
    <property type="project" value="UniProtKB-KW"/>
</dbReference>
<dbReference type="InterPro" id="IPR002047">
    <property type="entry name" value="Adipokinetic_hormone_CS"/>
</dbReference>
<dbReference type="PROSITE" id="PS00256">
    <property type="entry name" value="AKH"/>
    <property type="match status" value="1"/>
</dbReference>
<protein>
    <recommendedName>
        <fullName evidence="1">Hypertrehalosaemic factor</fullName>
    </recommendedName>
    <alternativeName>
        <fullName evidence="4">Adipokinetic hormone 1</fullName>
        <shortName evidence="4">PanSp-AKH-1</shortName>
    </alternativeName>
    <alternativeName>
        <fullName evidence="1">Hypertrehalosaemic neuropeptide</fullName>
    </alternativeName>
</protein>
<comment type="function">
    <text evidence="5">Hypertrehalosaemic factors are neuropeptides that elevate the level of trehalose in the hemolymph (trehalose is the major carbohydrate in the hemolymph of insects).</text>
</comment>
<comment type="subcellular location">
    <subcellularLocation>
        <location evidence="5">Secreted</location>
    </subcellularLocation>
</comment>
<comment type="similarity">
    <text evidence="2">Belongs to the AKH/HRTH/RPCH family.</text>
</comment>
<accession>P85697</accession>
<feature type="peptide" id="PRO_0000378660" description="Hypertrehalosaemic factor" evidence="3">
    <location>
        <begin position="1"/>
        <end position="10"/>
    </location>
</feature>
<feature type="modified residue" description="Pyrrolidone carboxylic acid" evidence="3">
    <location>
        <position position="1"/>
    </location>
</feature>
<feature type="modified residue" description="Threonine amide" evidence="3">
    <location>
        <position position="10"/>
    </location>
</feature>
<name>HTF_PANSS</name>
<keyword id="KW-0027">Amidation</keyword>
<keyword id="KW-0903">Direct protein sequencing</keyword>
<keyword id="KW-0372">Hormone</keyword>
<keyword id="KW-0527">Neuropeptide</keyword>
<keyword id="KW-0873">Pyrrolidone carboxylic acid</keyword>
<keyword id="KW-0964">Secreted</keyword>